<evidence type="ECO:0000255" key="1">
    <source>
        <dbReference type="HAMAP-Rule" id="MF_00072"/>
    </source>
</evidence>
<sequence>MSEYLQQIAKRRTFAIISHPDAGKTTITEKMLLFGNAIKTAGTVKAKKSGIHATSDWMEMEKQRGISITTSVMQFPYNGRIINLLDTPGHEDFSEDTYRTLTAVDSALMVVDAVKGVEDRTIKLMNVCRLRDTPIVTFMNKFDRDTRDPLELLDEVENILKIKCAPMNWPIGMGKYFKGVYDLYNDEVTLFETGHGHEIYPYKKIKGLANAKDSIGIDLYEDLEMEIDLVRGASHEFDEQEFLEGNLTPVYFGTALSNFGVKEMMDGFTRYAPAPQHREADQRVVAADEQKLTGFVFKIQANMDEKHRNRIAFFRICSGKYEKGMKIFHERTGKQMQISKALTFMAGEREQVEEGYAGDIIGLHNHGSIQIGDSFTQGEKLKFKGIPNFAPEIFKRVKLNDPLKMKALQKGLVQLSEEGATQVFKPFISNDLVLGAVGVLQFDVVAQRLASEYNVKCSYEGVNVTLARWIFCNDEKKLNDFKKKYEVNLAYDGAGYLTYLAPTGVNLQLAQEKNPDIIFSATREH</sequence>
<comment type="function">
    <text evidence="1">Increases the formation of ribosomal termination complexes and stimulates activities of RF-1 and RF-2. It binds guanine nucleotides and has strong preference for UGA stop codons. It may interact directly with the ribosome. The stimulation of RF-1 and RF-2 is significantly reduced by GTP and GDP, but not by GMP.</text>
</comment>
<comment type="subcellular location">
    <subcellularLocation>
        <location evidence="1">Cytoplasm</location>
    </subcellularLocation>
</comment>
<comment type="similarity">
    <text evidence="1">Belongs to the TRAFAC class translation factor GTPase superfamily. Classic translation factor GTPase family. PrfC subfamily.</text>
</comment>
<keyword id="KW-0963">Cytoplasm</keyword>
<keyword id="KW-0342">GTP-binding</keyword>
<keyword id="KW-0547">Nucleotide-binding</keyword>
<keyword id="KW-0648">Protein biosynthesis</keyword>
<proteinExistence type="inferred from homology"/>
<name>RF3_FRATO</name>
<feature type="chain" id="PRO_1000023648" description="Peptide chain release factor 3">
    <location>
        <begin position="1"/>
        <end position="525"/>
    </location>
</feature>
<feature type="domain" description="tr-type G">
    <location>
        <begin position="9"/>
        <end position="276"/>
    </location>
</feature>
<feature type="binding site" evidence="1">
    <location>
        <begin position="18"/>
        <end position="25"/>
    </location>
    <ligand>
        <name>GTP</name>
        <dbReference type="ChEBI" id="CHEBI:37565"/>
    </ligand>
</feature>
<feature type="binding site" evidence="1">
    <location>
        <begin position="86"/>
        <end position="90"/>
    </location>
    <ligand>
        <name>GTP</name>
        <dbReference type="ChEBI" id="CHEBI:37565"/>
    </ligand>
</feature>
<feature type="binding site" evidence="1">
    <location>
        <begin position="140"/>
        <end position="143"/>
    </location>
    <ligand>
        <name>GTP</name>
        <dbReference type="ChEBI" id="CHEBI:37565"/>
    </ligand>
</feature>
<protein>
    <recommendedName>
        <fullName evidence="1">Peptide chain release factor 3</fullName>
        <shortName evidence="1">RF-3</shortName>
    </recommendedName>
</protein>
<dbReference type="EMBL" id="CP000437">
    <property type="protein sequence ID" value="ABI83382.1"/>
    <property type="molecule type" value="Genomic_DNA"/>
</dbReference>
<dbReference type="RefSeq" id="WP_003017082.1">
    <property type="nucleotide sequence ID" value="NC_017463.1"/>
</dbReference>
<dbReference type="SMR" id="Q0BKK2"/>
<dbReference type="KEGG" id="fth:FTH_1600"/>
<dbReference type="GO" id="GO:0005829">
    <property type="term" value="C:cytosol"/>
    <property type="evidence" value="ECO:0007669"/>
    <property type="project" value="TreeGrafter"/>
</dbReference>
<dbReference type="GO" id="GO:0005525">
    <property type="term" value="F:GTP binding"/>
    <property type="evidence" value="ECO:0007669"/>
    <property type="project" value="UniProtKB-UniRule"/>
</dbReference>
<dbReference type="GO" id="GO:0003924">
    <property type="term" value="F:GTPase activity"/>
    <property type="evidence" value="ECO:0007669"/>
    <property type="project" value="InterPro"/>
</dbReference>
<dbReference type="GO" id="GO:0097216">
    <property type="term" value="F:guanosine tetraphosphate binding"/>
    <property type="evidence" value="ECO:0007669"/>
    <property type="project" value="UniProtKB-ARBA"/>
</dbReference>
<dbReference type="GO" id="GO:0016150">
    <property type="term" value="F:translation release factor activity, codon nonspecific"/>
    <property type="evidence" value="ECO:0007669"/>
    <property type="project" value="TreeGrafter"/>
</dbReference>
<dbReference type="GO" id="GO:0016149">
    <property type="term" value="F:translation release factor activity, codon specific"/>
    <property type="evidence" value="ECO:0007669"/>
    <property type="project" value="UniProtKB-UniRule"/>
</dbReference>
<dbReference type="GO" id="GO:0006449">
    <property type="term" value="P:regulation of translational termination"/>
    <property type="evidence" value="ECO:0007669"/>
    <property type="project" value="UniProtKB-UniRule"/>
</dbReference>
<dbReference type="CDD" id="cd04169">
    <property type="entry name" value="RF3"/>
    <property type="match status" value="1"/>
</dbReference>
<dbReference type="CDD" id="cd16259">
    <property type="entry name" value="RF3_III"/>
    <property type="match status" value="1"/>
</dbReference>
<dbReference type="FunFam" id="2.40.30.10:FF:000040">
    <property type="entry name" value="Peptide chain release factor 3"/>
    <property type="match status" value="1"/>
</dbReference>
<dbReference type="FunFam" id="3.30.70.3280:FF:000001">
    <property type="entry name" value="Peptide chain release factor 3"/>
    <property type="match status" value="1"/>
</dbReference>
<dbReference type="FunFam" id="3.40.50.300:FF:000542">
    <property type="entry name" value="Peptide chain release factor 3"/>
    <property type="match status" value="1"/>
</dbReference>
<dbReference type="Gene3D" id="3.40.50.300">
    <property type="entry name" value="P-loop containing nucleotide triphosphate hydrolases"/>
    <property type="match status" value="1"/>
</dbReference>
<dbReference type="Gene3D" id="3.30.70.3280">
    <property type="entry name" value="Peptide chain release factor 3, domain III"/>
    <property type="match status" value="1"/>
</dbReference>
<dbReference type="Gene3D" id="2.40.30.10">
    <property type="entry name" value="Translation factors"/>
    <property type="match status" value="1"/>
</dbReference>
<dbReference type="HAMAP" id="MF_00072">
    <property type="entry name" value="Rel_fac_3"/>
    <property type="match status" value="1"/>
</dbReference>
<dbReference type="InterPro" id="IPR053905">
    <property type="entry name" value="EF-G-like_DII"/>
</dbReference>
<dbReference type="InterPro" id="IPR035647">
    <property type="entry name" value="EFG_III/V"/>
</dbReference>
<dbReference type="InterPro" id="IPR031157">
    <property type="entry name" value="G_TR_CS"/>
</dbReference>
<dbReference type="InterPro" id="IPR027417">
    <property type="entry name" value="P-loop_NTPase"/>
</dbReference>
<dbReference type="InterPro" id="IPR004548">
    <property type="entry name" value="PrfC"/>
</dbReference>
<dbReference type="InterPro" id="IPR032090">
    <property type="entry name" value="RF3_C"/>
</dbReference>
<dbReference type="InterPro" id="IPR038467">
    <property type="entry name" value="RF3_dom_3_sf"/>
</dbReference>
<dbReference type="InterPro" id="IPR041732">
    <property type="entry name" value="RF3_GTP-bd"/>
</dbReference>
<dbReference type="InterPro" id="IPR005225">
    <property type="entry name" value="Small_GTP-bd"/>
</dbReference>
<dbReference type="InterPro" id="IPR000795">
    <property type="entry name" value="T_Tr_GTP-bd_dom"/>
</dbReference>
<dbReference type="InterPro" id="IPR009000">
    <property type="entry name" value="Transl_B-barrel_sf"/>
</dbReference>
<dbReference type="NCBIfam" id="TIGR00503">
    <property type="entry name" value="prfC"/>
    <property type="match status" value="1"/>
</dbReference>
<dbReference type="NCBIfam" id="NF001964">
    <property type="entry name" value="PRK00741.1"/>
    <property type="match status" value="1"/>
</dbReference>
<dbReference type="NCBIfam" id="TIGR00231">
    <property type="entry name" value="small_GTP"/>
    <property type="match status" value="1"/>
</dbReference>
<dbReference type="PANTHER" id="PTHR43556">
    <property type="entry name" value="PEPTIDE CHAIN RELEASE FACTOR RF3"/>
    <property type="match status" value="1"/>
</dbReference>
<dbReference type="PANTHER" id="PTHR43556:SF2">
    <property type="entry name" value="PEPTIDE CHAIN RELEASE FACTOR RF3"/>
    <property type="match status" value="1"/>
</dbReference>
<dbReference type="Pfam" id="PF22042">
    <property type="entry name" value="EF-G_D2"/>
    <property type="match status" value="1"/>
</dbReference>
<dbReference type="Pfam" id="PF00009">
    <property type="entry name" value="GTP_EFTU"/>
    <property type="match status" value="1"/>
</dbReference>
<dbReference type="Pfam" id="PF16658">
    <property type="entry name" value="RF3_C"/>
    <property type="match status" value="1"/>
</dbReference>
<dbReference type="PRINTS" id="PR00315">
    <property type="entry name" value="ELONGATNFCT"/>
</dbReference>
<dbReference type="SUPFAM" id="SSF54980">
    <property type="entry name" value="EF-G C-terminal domain-like"/>
    <property type="match status" value="1"/>
</dbReference>
<dbReference type="SUPFAM" id="SSF52540">
    <property type="entry name" value="P-loop containing nucleoside triphosphate hydrolases"/>
    <property type="match status" value="1"/>
</dbReference>
<dbReference type="SUPFAM" id="SSF50447">
    <property type="entry name" value="Translation proteins"/>
    <property type="match status" value="1"/>
</dbReference>
<dbReference type="PROSITE" id="PS00301">
    <property type="entry name" value="G_TR_1"/>
    <property type="match status" value="1"/>
</dbReference>
<dbReference type="PROSITE" id="PS51722">
    <property type="entry name" value="G_TR_2"/>
    <property type="match status" value="1"/>
</dbReference>
<organism>
    <name type="scientific">Francisella tularensis subsp. holarctica (strain OSU18)</name>
    <dbReference type="NCBI Taxonomy" id="393011"/>
    <lineage>
        <taxon>Bacteria</taxon>
        <taxon>Pseudomonadati</taxon>
        <taxon>Pseudomonadota</taxon>
        <taxon>Gammaproteobacteria</taxon>
        <taxon>Thiotrichales</taxon>
        <taxon>Francisellaceae</taxon>
        <taxon>Francisella</taxon>
    </lineage>
</organism>
<accession>Q0BKK2</accession>
<reference key="1">
    <citation type="journal article" date="2006" name="J. Bacteriol.">
        <title>Chromosome rearrangement and diversification of Francisella tularensis revealed by the type B (OSU18) genome sequence.</title>
        <authorList>
            <person name="Petrosino J.F."/>
            <person name="Xiang Q."/>
            <person name="Karpathy S.E."/>
            <person name="Jiang H."/>
            <person name="Yerrapragada S."/>
            <person name="Liu Y."/>
            <person name="Gioia J."/>
            <person name="Hemphill L."/>
            <person name="Gonzalez A."/>
            <person name="Raghavan T.M."/>
            <person name="Uzman A."/>
            <person name="Fox G.E."/>
            <person name="Highlander S."/>
            <person name="Reichard M."/>
            <person name="Morton R.J."/>
            <person name="Clinkenbeard K.D."/>
            <person name="Weinstock G.M."/>
        </authorList>
    </citation>
    <scope>NUCLEOTIDE SEQUENCE [LARGE SCALE GENOMIC DNA]</scope>
    <source>
        <strain>OSU18</strain>
    </source>
</reference>
<gene>
    <name evidence="1" type="primary">prfC</name>
    <name type="ordered locus">FTH_1600</name>
</gene>